<dbReference type="EC" id="1.2.1.10" evidence="1"/>
<dbReference type="EMBL" id="AB116258">
    <property type="protein sequence ID" value="BAD08310.1"/>
    <property type="molecule type" value="Genomic_DNA"/>
</dbReference>
<dbReference type="RefSeq" id="WP_020960483.1">
    <property type="nucleotide sequence ID" value="NC_022080.4"/>
</dbReference>
<dbReference type="SMR" id="Q764S1"/>
<dbReference type="STRING" id="1921421.M493_12200"/>
<dbReference type="OrthoDB" id="9786743at2"/>
<dbReference type="GO" id="GO:0008774">
    <property type="term" value="F:acetaldehyde dehydrogenase (acetylating) activity"/>
    <property type="evidence" value="ECO:0007669"/>
    <property type="project" value="UniProtKB-UniRule"/>
</dbReference>
<dbReference type="GO" id="GO:0051287">
    <property type="term" value="F:NAD binding"/>
    <property type="evidence" value="ECO:0007669"/>
    <property type="project" value="UniProtKB-UniRule"/>
</dbReference>
<dbReference type="GO" id="GO:0009056">
    <property type="term" value="P:catabolic process"/>
    <property type="evidence" value="ECO:0007669"/>
    <property type="project" value="UniProtKB-KW"/>
</dbReference>
<dbReference type="CDD" id="cd23933">
    <property type="entry name" value="ALDH_C"/>
    <property type="match status" value="1"/>
</dbReference>
<dbReference type="Gene3D" id="3.30.360.10">
    <property type="entry name" value="Dihydrodipicolinate Reductase, domain 2"/>
    <property type="match status" value="1"/>
</dbReference>
<dbReference type="Gene3D" id="3.40.50.720">
    <property type="entry name" value="NAD(P)-binding Rossmann-like Domain"/>
    <property type="match status" value="1"/>
</dbReference>
<dbReference type="HAMAP" id="MF_01657">
    <property type="entry name" value="Ac_ald_DH_ac"/>
    <property type="match status" value="1"/>
</dbReference>
<dbReference type="InterPro" id="IPR003361">
    <property type="entry name" value="Acetaldehyde_dehydrogenase"/>
</dbReference>
<dbReference type="InterPro" id="IPR015426">
    <property type="entry name" value="Acetylaldehyde_DH_C"/>
</dbReference>
<dbReference type="InterPro" id="IPR036291">
    <property type="entry name" value="NAD(P)-bd_dom_sf"/>
</dbReference>
<dbReference type="InterPro" id="IPR000534">
    <property type="entry name" value="Semialdehyde_DH_NAD-bd"/>
</dbReference>
<dbReference type="NCBIfam" id="TIGR03215">
    <property type="entry name" value="ac_ald_DH_ac"/>
    <property type="match status" value="1"/>
</dbReference>
<dbReference type="NCBIfam" id="NF006157">
    <property type="entry name" value="PRK08300.1"/>
    <property type="match status" value="1"/>
</dbReference>
<dbReference type="Pfam" id="PF09290">
    <property type="entry name" value="AcetDehyd-dimer"/>
    <property type="match status" value="1"/>
</dbReference>
<dbReference type="Pfam" id="PF01118">
    <property type="entry name" value="Semialdhyde_dh"/>
    <property type="match status" value="1"/>
</dbReference>
<dbReference type="PIRSF" id="PIRSF015689">
    <property type="entry name" value="Actaldh_dh_actl"/>
    <property type="match status" value="1"/>
</dbReference>
<dbReference type="SMART" id="SM00859">
    <property type="entry name" value="Semialdhyde_dh"/>
    <property type="match status" value="1"/>
</dbReference>
<dbReference type="SUPFAM" id="SSF55347">
    <property type="entry name" value="Glyceraldehyde-3-phosphate dehydrogenase-like, C-terminal domain"/>
    <property type="match status" value="1"/>
</dbReference>
<dbReference type="SUPFAM" id="SSF51735">
    <property type="entry name" value="NAD(P)-binding Rossmann-fold domains"/>
    <property type="match status" value="1"/>
</dbReference>
<protein>
    <recommendedName>
        <fullName evidence="1">Acetaldehyde dehydrogenase</fullName>
        <ecNumber evidence="1">1.2.1.10</ecNumber>
    </recommendedName>
    <alternativeName>
        <fullName evidence="1">Acetaldehyde dehydrogenase [acetylating]</fullName>
    </alternativeName>
</protein>
<comment type="catalytic activity">
    <reaction evidence="1">
        <text>acetaldehyde + NAD(+) + CoA = acetyl-CoA + NADH + H(+)</text>
        <dbReference type="Rhea" id="RHEA:23288"/>
        <dbReference type="ChEBI" id="CHEBI:15343"/>
        <dbReference type="ChEBI" id="CHEBI:15378"/>
        <dbReference type="ChEBI" id="CHEBI:57287"/>
        <dbReference type="ChEBI" id="CHEBI:57288"/>
        <dbReference type="ChEBI" id="CHEBI:57540"/>
        <dbReference type="ChEBI" id="CHEBI:57945"/>
        <dbReference type="EC" id="1.2.1.10"/>
    </reaction>
</comment>
<comment type="similarity">
    <text evidence="1">Belongs to the acetaldehyde dehydrogenase family.</text>
</comment>
<gene>
    <name type="primary">nahO</name>
</gene>
<reference key="1">
    <citation type="journal article" date="2004" name="Microbiology">
        <title>Genes for Mn(II)-dependent NahC and Fe(II)-dependent NahH located in close proximity in the thermophilic naphthalene and PCB degrader, Bacillus sp. JF8: cloning and characterization.</title>
        <authorList>
            <person name="Miyazawa D."/>
            <person name="Mukerjee-Dhar G."/>
            <person name="Shimura M."/>
            <person name="Hatta T."/>
            <person name="Kimbara K."/>
        </authorList>
    </citation>
    <scope>NUCLEOTIDE SEQUENCE [GENOMIC DNA]</scope>
    <source>
        <strain>JF8</strain>
    </source>
</reference>
<evidence type="ECO:0000255" key="1">
    <source>
        <dbReference type="HAMAP-Rule" id="MF_01657"/>
    </source>
</evidence>
<accession>Q764S1</accession>
<keyword id="KW-0058">Aromatic hydrocarbons catabolism</keyword>
<keyword id="KW-0520">NAD</keyword>
<keyword id="KW-0560">Oxidoreductase</keyword>
<feature type="chain" id="PRO_0000387625" description="Acetaldehyde dehydrogenase">
    <location>
        <begin position="1"/>
        <end position="302"/>
    </location>
</feature>
<feature type="active site" description="Acyl-thioester intermediate" evidence="1">
    <location>
        <position position="127"/>
    </location>
</feature>
<feature type="binding site" evidence="1">
    <location>
        <begin position="12"/>
        <end position="15"/>
    </location>
    <ligand>
        <name>NAD(+)</name>
        <dbReference type="ChEBI" id="CHEBI:57540"/>
    </ligand>
</feature>
<feature type="binding site" evidence="1">
    <location>
        <begin position="158"/>
        <end position="166"/>
    </location>
    <ligand>
        <name>NAD(+)</name>
        <dbReference type="ChEBI" id="CHEBI:57540"/>
    </ligand>
</feature>
<feature type="binding site" evidence="1">
    <location>
        <position position="276"/>
    </location>
    <ligand>
        <name>NAD(+)</name>
        <dbReference type="ChEBI" id="CHEBI:57540"/>
    </ligand>
</feature>
<organism>
    <name type="scientific">Geobacillus genomosp. 3</name>
    <dbReference type="NCBI Taxonomy" id="1921421"/>
    <lineage>
        <taxon>Bacteria</taxon>
        <taxon>Bacillati</taxon>
        <taxon>Bacillota</taxon>
        <taxon>Bacilli</taxon>
        <taxon>Bacillales</taxon>
        <taxon>Anoxybacillaceae</taxon>
        <taxon>Geobacillus</taxon>
    </lineage>
</organism>
<name>ACDH_GEOG3</name>
<proteinExistence type="inferred from homology"/>
<sequence>MNRTVKVAILGSGNIGTDLMYKILKKRWVLELSMIAGIDPQSEGLARARAEGVYATAGGIDAILEDPEIKIVFDATSAKAHLKHAKRLKEAGKVAIDLTPAAVGPYVVPPVNLMEHVDKDNVNLITCGGQATIPLVYAVSRVANVKYAEMVSTVSSSSAGPGTRQNIDEFTFTTSRGLEVIGGAEKGKAIIILNPAKPPILMRNTVYIAYEDGDDHQIRHSIGQMIHDVQQYVPGYRLKGEPIFDRRETPKGRLDVVILLLEVEGAGDFLPVSAGNLDIMTASAKQVGEVIAKRLIEMTSTA</sequence>